<feature type="chain" id="PRO_1000049841" description="3-hydroxyacyl-[acyl-carrier-protein] dehydratase FabZ">
    <location>
        <begin position="1"/>
        <end position="148"/>
    </location>
</feature>
<feature type="active site" evidence="1">
    <location>
        <position position="48"/>
    </location>
</feature>
<accession>A7GWE7</accession>
<organism>
    <name type="scientific">Campylobacter curvus (strain 525.92)</name>
    <dbReference type="NCBI Taxonomy" id="360105"/>
    <lineage>
        <taxon>Bacteria</taxon>
        <taxon>Pseudomonadati</taxon>
        <taxon>Campylobacterota</taxon>
        <taxon>Epsilonproteobacteria</taxon>
        <taxon>Campylobacterales</taxon>
        <taxon>Campylobacteraceae</taxon>
        <taxon>Campylobacter</taxon>
    </lineage>
</organism>
<name>FABZ_CAMC5</name>
<comment type="function">
    <text evidence="1">Involved in unsaturated fatty acids biosynthesis. Catalyzes the dehydration of short chain beta-hydroxyacyl-ACPs and long chain saturated and unsaturated beta-hydroxyacyl-ACPs.</text>
</comment>
<comment type="catalytic activity">
    <reaction evidence="1">
        <text>a (3R)-hydroxyacyl-[ACP] = a (2E)-enoyl-[ACP] + H2O</text>
        <dbReference type="Rhea" id="RHEA:13097"/>
        <dbReference type="Rhea" id="RHEA-COMP:9925"/>
        <dbReference type="Rhea" id="RHEA-COMP:9945"/>
        <dbReference type="ChEBI" id="CHEBI:15377"/>
        <dbReference type="ChEBI" id="CHEBI:78784"/>
        <dbReference type="ChEBI" id="CHEBI:78827"/>
        <dbReference type="EC" id="4.2.1.59"/>
    </reaction>
</comment>
<comment type="subcellular location">
    <subcellularLocation>
        <location evidence="1">Cytoplasm</location>
    </subcellularLocation>
</comment>
<comment type="similarity">
    <text evidence="1">Belongs to the thioester dehydratase family. FabZ subfamily.</text>
</comment>
<reference key="1">
    <citation type="submission" date="2007-07" db="EMBL/GenBank/DDBJ databases">
        <title>Genome sequence of Campylobacter curvus 525.92 isolated from human feces.</title>
        <authorList>
            <person name="Fouts D.E."/>
            <person name="Mongodin E.F."/>
            <person name="Puiu D."/>
            <person name="Sebastian Y."/>
            <person name="Miller W.G."/>
            <person name="Mandrell R.E."/>
            <person name="Lastovica A.J."/>
            <person name="Nelson K.E."/>
        </authorList>
    </citation>
    <scope>NUCLEOTIDE SEQUENCE [LARGE SCALE GENOMIC DNA]</scope>
    <source>
        <strain>525.92</strain>
    </source>
</reference>
<protein>
    <recommendedName>
        <fullName evidence="1">3-hydroxyacyl-[acyl-carrier-protein] dehydratase FabZ</fullName>
        <ecNumber evidence="1">4.2.1.59</ecNumber>
    </recommendedName>
    <alternativeName>
        <fullName evidence="1">(3R)-hydroxymyristoyl-[acyl-carrier-protein] dehydratase</fullName>
        <shortName evidence="1">(3R)-hydroxymyristoyl-ACP dehydrase</shortName>
    </alternativeName>
    <alternativeName>
        <fullName evidence="1">Beta-hydroxyacyl-ACP dehydratase</fullName>
    </alternativeName>
</protein>
<proteinExistence type="inferred from homology"/>
<sequence>MIDVVEIQKILPHRFPFLLIDRVTELEPAKHIVAYKNVTIGEPIFQGHFPGHPIYPGVMIVEGMAQAGGVLAFKSMSDEHQADIENKVVYFMSIDKAKFRHPVRPGDRLEYRLEVLKHKGNIWVLDGKAYIDGNLCAEAELKAMIVDK</sequence>
<gene>
    <name evidence="1" type="primary">fabZ</name>
    <name type="ordered locus">Ccur92_02350</name>
    <name type="ORF">CCV52592_0865</name>
</gene>
<dbReference type="EC" id="4.2.1.59" evidence="1"/>
<dbReference type="EMBL" id="CP000767">
    <property type="protein sequence ID" value="EAU01173.1"/>
    <property type="molecule type" value="Genomic_DNA"/>
</dbReference>
<dbReference type="SMR" id="A7GWE7"/>
<dbReference type="STRING" id="360105.CCV52592_0865"/>
<dbReference type="KEGG" id="ccv:CCV52592_0865"/>
<dbReference type="HOGENOM" id="CLU_078912_1_2_7"/>
<dbReference type="OrthoDB" id="9772788at2"/>
<dbReference type="Proteomes" id="UP000006380">
    <property type="component" value="Chromosome"/>
</dbReference>
<dbReference type="GO" id="GO:0005737">
    <property type="term" value="C:cytoplasm"/>
    <property type="evidence" value="ECO:0007669"/>
    <property type="project" value="UniProtKB-SubCell"/>
</dbReference>
<dbReference type="GO" id="GO:0016020">
    <property type="term" value="C:membrane"/>
    <property type="evidence" value="ECO:0007669"/>
    <property type="project" value="GOC"/>
</dbReference>
<dbReference type="GO" id="GO:0019171">
    <property type="term" value="F:(3R)-hydroxyacyl-[acyl-carrier-protein] dehydratase activity"/>
    <property type="evidence" value="ECO:0007669"/>
    <property type="project" value="UniProtKB-EC"/>
</dbReference>
<dbReference type="GO" id="GO:0006633">
    <property type="term" value="P:fatty acid biosynthetic process"/>
    <property type="evidence" value="ECO:0007669"/>
    <property type="project" value="UniProtKB-UniRule"/>
</dbReference>
<dbReference type="GO" id="GO:0009245">
    <property type="term" value="P:lipid A biosynthetic process"/>
    <property type="evidence" value="ECO:0007669"/>
    <property type="project" value="UniProtKB-UniRule"/>
</dbReference>
<dbReference type="CDD" id="cd01288">
    <property type="entry name" value="FabZ"/>
    <property type="match status" value="1"/>
</dbReference>
<dbReference type="FunFam" id="3.10.129.10:FF:000001">
    <property type="entry name" value="3-hydroxyacyl-[acyl-carrier-protein] dehydratase FabZ"/>
    <property type="match status" value="1"/>
</dbReference>
<dbReference type="Gene3D" id="3.10.129.10">
    <property type="entry name" value="Hotdog Thioesterase"/>
    <property type="match status" value="1"/>
</dbReference>
<dbReference type="HAMAP" id="MF_00406">
    <property type="entry name" value="FabZ"/>
    <property type="match status" value="1"/>
</dbReference>
<dbReference type="InterPro" id="IPR013114">
    <property type="entry name" value="FabA_FabZ"/>
</dbReference>
<dbReference type="InterPro" id="IPR010084">
    <property type="entry name" value="FabZ"/>
</dbReference>
<dbReference type="InterPro" id="IPR029069">
    <property type="entry name" value="HotDog_dom_sf"/>
</dbReference>
<dbReference type="NCBIfam" id="TIGR01750">
    <property type="entry name" value="fabZ"/>
    <property type="match status" value="1"/>
</dbReference>
<dbReference type="NCBIfam" id="NF000582">
    <property type="entry name" value="PRK00006.1"/>
    <property type="match status" value="1"/>
</dbReference>
<dbReference type="PANTHER" id="PTHR30272">
    <property type="entry name" value="3-HYDROXYACYL-[ACYL-CARRIER-PROTEIN] DEHYDRATASE"/>
    <property type="match status" value="1"/>
</dbReference>
<dbReference type="PANTHER" id="PTHR30272:SF1">
    <property type="entry name" value="3-HYDROXYACYL-[ACYL-CARRIER-PROTEIN] DEHYDRATASE"/>
    <property type="match status" value="1"/>
</dbReference>
<dbReference type="Pfam" id="PF07977">
    <property type="entry name" value="FabA"/>
    <property type="match status" value="1"/>
</dbReference>
<dbReference type="SUPFAM" id="SSF54637">
    <property type="entry name" value="Thioesterase/thiol ester dehydrase-isomerase"/>
    <property type="match status" value="1"/>
</dbReference>
<evidence type="ECO:0000255" key="1">
    <source>
        <dbReference type="HAMAP-Rule" id="MF_00406"/>
    </source>
</evidence>
<keyword id="KW-0963">Cytoplasm</keyword>
<keyword id="KW-0441">Lipid A biosynthesis</keyword>
<keyword id="KW-0444">Lipid biosynthesis</keyword>
<keyword id="KW-0443">Lipid metabolism</keyword>
<keyword id="KW-0456">Lyase</keyword>
<keyword id="KW-1185">Reference proteome</keyword>